<reference key="1">
    <citation type="journal article" date="2004" name="Environ. Microbiol.">
        <title>The genome of Desulfotalea psychrophila, a sulfate-reducing bacterium from permanently cold Arctic sediments.</title>
        <authorList>
            <person name="Rabus R."/>
            <person name="Ruepp A."/>
            <person name="Frickey T."/>
            <person name="Rattei T."/>
            <person name="Fartmann B."/>
            <person name="Stark M."/>
            <person name="Bauer M."/>
            <person name="Zibat A."/>
            <person name="Lombardot T."/>
            <person name="Becker I."/>
            <person name="Amann J."/>
            <person name="Gellner K."/>
            <person name="Teeling H."/>
            <person name="Leuschner W.D."/>
            <person name="Gloeckner F.-O."/>
            <person name="Lupas A.N."/>
            <person name="Amann R."/>
            <person name="Klenk H.-P."/>
        </authorList>
    </citation>
    <scope>NUCLEOTIDE SEQUENCE [LARGE SCALE GENOMIC DNA]</scope>
    <source>
        <strain>DSM 12343 / LSv54</strain>
    </source>
</reference>
<sequence length="516" mass="57364">MDIHKEKIIILDFGSQTTQLIARRVREMKVYSEIHPFSLPLEKLKELNPTGIILSGGPCSVYDDDAPHSDAGLFELGVPVFGICYGAQLMIQQLGGSVEKAEKREFGKAEIQILNDSDLFAGLDVARSHQVWMSHGDRVEVIPDQFEVSAESAHSPYAALRHRSKPFVAVQFHPEVVHSIIGTDLLRNFVFGLCKCQATWTMQGFIESNVAAIKEKVGDAHVICALSGGVDSSVVAAMIHKAIGSQLTCVYVNNGLMRIGESEGIIKFFKENTDLHLIDVDASDYFLGKLEGVTDPEVKRQHIGLGFIKIFEEEAHKIDGDVKFLAQGTLYPDVVESVSFRGAAPIKSHHNVGCLPDIMKLSLIEPLRELFKDEVRELGVELGLPDEAVHRQPFPGPGLSIRIMGEVTPERLDIVRRADVIVLDEMKKHGYYNKVWQSFAVLLPIQTVGVMGDFRTYEHVVALRVVDSRDAMTADWSRVPYDILGDISTRIINEVRGVNRVVYDISSKPPATIEWE</sequence>
<name>GUAA_DESPS</name>
<evidence type="ECO:0000255" key="1">
    <source>
        <dbReference type="HAMAP-Rule" id="MF_00344"/>
    </source>
</evidence>
<accession>Q6APU2</accession>
<keyword id="KW-0067">ATP-binding</keyword>
<keyword id="KW-0315">Glutamine amidotransferase</keyword>
<keyword id="KW-0332">GMP biosynthesis</keyword>
<keyword id="KW-0436">Ligase</keyword>
<keyword id="KW-0547">Nucleotide-binding</keyword>
<keyword id="KW-0658">Purine biosynthesis</keyword>
<keyword id="KW-1185">Reference proteome</keyword>
<proteinExistence type="inferred from homology"/>
<dbReference type="EC" id="6.3.5.2" evidence="1"/>
<dbReference type="EMBL" id="CR522870">
    <property type="protein sequence ID" value="CAG35632.1"/>
    <property type="molecule type" value="Genomic_DNA"/>
</dbReference>
<dbReference type="RefSeq" id="WP_011188146.1">
    <property type="nucleotide sequence ID" value="NC_006138.1"/>
</dbReference>
<dbReference type="SMR" id="Q6APU2"/>
<dbReference type="STRING" id="177439.DP0903"/>
<dbReference type="MEROPS" id="C26.957"/>
<dbReference type="KEGG" id="dps:DP0903"/>
<dbReference type="eggNOG" id="COG0518">
    <property type="taxonomic scope" value="Bacteria"/>
</dbReference>
<dbReference type="eggNOG" id="COG0519">
    <property type="taxonomic scope" value="Bacteria"/>
</dbReference>
<dbReference type="HOGENOM" id="CLU_014340_0_5_7"/>
<dbReference type="OrthoDB" id="9802219at2"/>
<dbReference type="UniPathway" id="UPA00189">
    <property type="reaction ID" value="UER00296"/>
</dbReference>
<dbReference type="Proteomes" id="UP000000602">
    <property type="component" value="Chromosome"/>
</dbReference>
<dbReference type="GO" id="GO:0005829">
    <property type="term" value="C:cytosol"/>
    <property type="evidence" value="ECO:0007669"/>
    <property type="project" value="TreeGrafter"/>
</dbReference>
<dbReference type="GO" id="GO:0005524">
    <property type="term" value="F:ATP binding"/>
    <property type="evidence" value="ECO:0007669"/>
    <property type="project" value="UniProtKB-UniRule"/>
</dbReference>
<dbReference type="GO" id="GO:0003921">
    <property type="term" value="F:GMP synthase activity"/>
    <property type="evidence" value="ECO:0007669"/>
    <property type="project" value="InterPro"/>
</dbReference>
<dbReference type="CDD" id="cd01742">
    <property type="entry name" value="GATase1_GMP_Synthase"/>
    <property type="match status" value="1"/>
</dbReference>
<dbReference type="CDD" id="cd01997">
    <property type="entry name" value="GMP_synthase_C"/>
    <property type="match status" value="1"/>
</dbReference>
<dbReference type="FunFam" id="3.30.300.10:FF:000002">
    <property type="entry name" value="GMP synthase [glutamine-hydrolyzing]"/>
    <property type="match status" value="1"/>
</dbReference>
<dbReference type="FunFam" id="3.40.50.620:FF:000001">
    <property type="entry name" value="GMP synthase [glutamine-hydrolyzing]"/>
    <property type="match status" value="1"/>
</dbReference>
<dbReference type="FunFam" id="3.40.50.880:FF:000001">
    <property type="entry name" value="GMP synthase [glutamine-hydrolyzing]"/>
    <property type="match status" value="1"/>
</dbReference>
<dbReference type="Gene3D" id="3.30.300.10">
    <property type="match status" value="1"/>
</dbReference>
<dbReference type="Gene3D" id="3.40.50.880">
    <property type="match status" value="1"/>
</dbReference>
<dbReference type="Gene3D" id="3.40.50.620">
    <property type="entry name" value="HUPs"/>
    <property type="match status" value="1"/>
</dbReference>
<dbReference type="HAMAP" id="MF_00344">
    <property type="entry name" value="GMP_synthase"/>
    <property type="match status" value="1"/>
</dbReference>
<dbReference type="InterPro" id="IPR029062">
    <property type="entry name" value="Class_I_gatase-like"/>
</dbReference>
<dbReference type="InterPro" id="IPR017926">
    <property type="entry name" value="GATASE"/>
</dbReference>
<dbReference type="InterPro" id="IPR001674">
    <property type="entry name" value="GMP_synth_C"/>
</dbReference>
<dbReference type="InterPro" id="IPR004739">
    <property type="entry name" value="GMP_synth_GATase"/>
</dbReference>
<dbReference type="InterPro" id="IPR022955">
    <property type="entry name" value="GMP_synthase"/>
</dbReference>
<dbReference type="InterPro" id="IPR025777">
    <property type="entry name" value="GMPS_ATP_PPase_dom"/>
</dbReference>
<dbReference type="InterPro" id="IPR014729">
    <property type="entry name" value="Rossmann-like_a/b/a_fold"/>
</dbReference>
<dbReference type="NCBIfam" id="TIGR00884">
    <property type="entry name" value="guaA_Cterm"/>
    <property type="match status" value="1"/>
</dbReference>
<dbReference type="NCBIfam" id="TIGR00888">
    <property type="entry name" value="guaA_Nterm"/>
    <property type="match status" value="1"/>
</dbReference>
<dbReference type="NCBIfam" id="NF000848">
    <property type="entry name" value="PRK00074.1"/>
    <property type="match status" value="1"/>
</dbReference>
<dbReference type="PANTHER" id="PTHR11922:SF2">
    <property type="entry name" value="GMP SYNTHASE [GLUTAMINE-HYDROLYZING]"/>
    <property type="match status" value="1"/>
</dbReference>
<dbReference type="PANTHER" id="PTHR11922">
    <property type="entry name" value="GMP SYNTHASE-RELATED"/>
    <property type="match status" value="1"/>
</dbReference>
<dbReference type="Pfam" id="PF00117">
    <property type="entry name" value="GATase"/>
    <property type="match status" value="1"/>
</dbReference>
<dbReference type="Pfam" id="PF00958">
    <property type="entry name" value="GMP_synt_C"/>
    <property type="match status" value="1"/>
</dbReference>
<dbReference type="Pfam" id="PF03054">
    <property type="entry name" value="tRNA_Me_trans"/>
    <property type="match status" value="1"/>
</dbReference>
<dbReference type="PRINTS" id="PR00097">
    <property type="entry name" value="ANTSNTHASEII"/>
</dbReference>
<dbReference type="PRINTS" id="PR00099">
    <property type="entry name" value="CPSGATASE"/>
</dbReference>
<dbReference type="PRINTS" id="PR00096">
    <property type="entry name" value="GATASE"/>
</dbReference>
<dbReference type="SUPFAM" id="SSF52402">
    <property type="entry name" value="Adenine nucleotide alpha hydrolases-like"/>
    <property type="match status" value="1"/>
</dbReference>
<dbReference type="SUPFAM" id="SSF52317">
    <property type="entry name" value="Class I glutamine amidotransferase-like"/>
    <property type="match status" value="1"/>
</dbReference>
<dbReference type="SUPFAM" id="SSF54810">
    <property type="entry name" value="GMP synthetase C-terminal dimerisation domain"/>
    <property type="match status" value="1"/>
</dbReference>
<dbReference type="PROSITE" id="PS51273">
    <property type="entry name" value="GATASE_TYPE_1"/>
    <property type="match status" value="1"/>
</dbReference>
<dbReference type="PROSITE" id="PS51553">
    <property type="entry name" value="GMPS_ATP_PPASE"/>
    <property type="match status" value="1"/>
</dbReference>
<gene>
    <name evidence="1" type="primary">guaA</name>
    <name type="ordered locus">DP0903</name>
</gene>
<protein>
    <recommendedName>
        <fullName evidence="1">GMP synthase [glutamine-hydrolyzing]</fullName>
        <ecNumber evidence="1">6.3.5.2</ecNumber>
    </recommendedName>
    <alternativeName>
        <fullName evidence="1">GMP synthetase</fullName>
    </alternativeName>
    <alternativeName>
        <fullName evidence="1">Glutamine amidotransferase</fullName>
    </alternativeName>
</protein>
<comment type="function">
    <text evidence="1">Catalyzes the synthesis of GMP from XMP.</text>
</comment>
<comment type="catalytic activity">
    <reaction evidence="1">
        <text>XMP + L-glutamine + ATP + H2O = GMP + L-glutamate + AMP + diphosphate + 2 H(+)</text>
        <dbReference type="Rhea" id="RHEA:11680"/>
        <dbReference type="ChEBI" id="CHEBI:15377"/>
        <dbReference type="ChEBI" id="CHEBI:15378"/>
        <dbReference type="ChEBI" id="CHEBI:29985"/>
        <dbReference type="ChEBI" id="CHEBI:30616"/>
        <dbReference type="ChEBI" id="CHEBI:33019"/>
        <dbReference type="ChEBI" id="CHEBI:57464"/>
        <dbReference type="ChEBI" id="CHEBI:58115"/>
        <dbReference type="ChEBI" id="CHEBI:58359"/>
        <dbReference type="ChEBI" id="CHEBI:456215"/>
        <dbReference type="EC" id="6.3.5.2"/>
    </reaction>
</comment>
<comment type="pathway">
    <text evidence="1">Purine metabolism; GMP biosynthesis; GMP from XMP (L-Gln route): step 1/1.</text>
</comment>
<comment type="subunit">
    <text evidence="1">Homodimer.</text>
</comment>
<feature type="chain" id="PRO_0000229423" description="GMP synthase [glutamine-hydrolyzing]">
    <location>
        <begin position="1"/>
        <end position="516"/>
    </location>
</feature>
<feature type="domain" description="Glutamine amidotransferase type-1" evidence="1">
    <location>
        <begin position="7"/>
        <end position="199"/>
    </location>
</feature>
<feature type="domain" description="GMPS ATP-PPase" evidence="1">
    <location>
        <begin position="200"/>
        <end position="391"/>
    </location>
</feature>
<feature type="active site" description="Nucleophile" evidence="1">
    <location>
        <position position="84"/>
    </location>
</feature>
<feature type="active site" evidence="1">
    <location>
        <position position="173"/>
    </location>
</feature>
<feature type="active site" evidence="1">
    <location>
        <position position="175"/>
    </location>
</feature>
<feature type="binding site" evidence="1">
    <location>
        <begin position="227"/>
        <end position="233"/>
    </location>
    <ligand>
        <name>ATP</name>
        <dbReference type="ChEBI" id="CHEBI:30616"/>
    </ligand>
</feature>
<organism>
    <name type="scientific">Desulfotalea psychrophila (strain LSv54 / DSM 12343)</name>
    <dbReference type="NCBI Taxonomy" id="177439"/>
    <lineage>
        <taxon>Bacteria</taxon>
        <taxon>Pseudomonadati</taxon>
        <taxon>Thermodesulfobacteriota</taxon>
        <taxon>Desulfobulbia</taxon>
        <taxon>Desulfobulbales</taxon>
        <taxon>Desulfocapsaceae</taxon>
        <taxon>Desulfotalea</taxon>
    </lineage>
</organism>